<feature type="chain" id="PRO_1000064076" description="2,3-bisphosphoglycerate-dependent phosphoglycerate mutase">
    <location>
        <begin position="1"/>
        <end position="235"/>
    </location>
</feature>
<feature type="active site" description="Tele-phosphohistidine intermediate" evidence="1">
    <location>
        <position position="9"/>
    </location>
</feature>
<feature type="active site" description="Proton donor/acceptor" evidence="1">
    <location>
        <position position="110"/>
    </location>
</feature>
<feature type="binding site" evidence="1">
    <location>
        <begin position="8"/>
        <end position="15"/>
    </location>
    <ligand>
        <name>substrate</name>
    </ligand>
</feature>
<feature type="binding site" evidence="1">
    <location>
        <begin position="21"/>
        <end position="22"/>
    </location>
    <ligand>
        <name>substrate</name>
    </ligand>
</feature>
<feature type="binding site" evidence="1">
    <location>
        <position position="58"/>
    </location>
    <ligand>
        <name>substrate</name>
    </ligand>
</feature>
<feature type="binding site" evidence="1">
    <location>
        <begin position="110"/>
        <end position="113"/>
    </location>
    <ligand>
        <name>substrate</name>
    </ligand>
</feature>
<feature type="binding site" evidence="1">
    <location>
        <position position="121"/>
    </location>
    <ligand>
        <name>substrate</name>
    </ligand>
</feature>
<feature type="binding site" evidence="1">
    <location>
        <begin position="137"/>
        <end position="138"/>
    </location>
    <ligand>
        <name>substrate</name>
    </ligand>
</feature>
<feature type="binding site" evidence="1">
    <location>
        <begin position="181"/>
        <end position="182"/>
    </location>
    <ligand>
        <name>substrate</name>
    </ligand>
</feature>
<feature type="site" description="Transition state stabilizer" evidence="1">
    <location>
        <position position="180"/>
    </location>
</feature>
<organism>
    <name type="scientific">Methanococcus vannielii (strain ATCC 35089 / DSM 1224 / JCM 13029 / OCM 148 / SB)</name>
    <dbReference type="NCBI Taxonomy" id="406327"/>
    <lineage>
        <taxon>Archaea</taxon>
        <taxon>Methanobacteriati</taxon>
        <taxon>Methanobacteriota</taxon>
        <taxon>Methanomada group</taxon>
        <taxon>Methanococci</taxon>
        <taxon>Methanococcales</taxon>
        <taxon>Methanococcaceae</taxon>
        <taxon>Methanococcus</taxon>
    </lineage>
</organism>
<keyword id="KW-0312">Gluconeogenesis</keyword>
<keyword id="KW-0324">Glycolysis</keyword>
<keyword id="KW-0413">Isomerase</keyword>
<comment type="function">
    <text evidence="1">Catalyzes the interconversion of 2-phosphoglycerate and 3-phosphoglycerate.</text>
</comment>
<comment type="catalytic activity">
    <reaction evidence="1">
        <text>(2R)-2-phosphoglycerate = (2R)-3-phosphoglycerate</text>
        <dbReference type="Rhea" id="RHEA:15901"/>
        <dbReference type="ChEBI" id="CHEBI:58272"/>
        <dbReference type="ChEBI" id="CHEBI:58289"/>
        <dbReference type="EC" id="5.4.2.11"/>
    </reaction>
</comment>
<comment type="pathway">
    <text evidence="1">Carbohydrate degradation; glycolysis; pyruvate from D-glyceraldehyde 3-phosphate: step 3/5.</text>
</comment>
<comment type="similarity">
    <text evidence="1">Belongs to the phosphoglycerate mutase family. BPG-dependent PGAM subfamily.</text>
</comment>
<reference key="1">
    <citation type="submission" date="2007-06" db="EMBL/GenBank/DDBJ databases">
        <title>Complete sequence of Methanococcus vannielii SB.</title>
        <authorList>
            <consortium name="US DOE Joint Genome Institute"/>
            <person name="Copeland A."/>
            <person name="Lucas S."/>
            <person name="Lapidus A."/>
            <person name="Barry K."/>
            <person name="Glavina del Rio T."/>
            <person name="Dalin E."/>
            <person name="Tice H."/>
            <person name="Pitluck S."/>
            <person name="Chain P."/>
            <person name="Malfatti S."/>
            <person name="Shin M."/>
            <person name="Vergez L."/>
            <person name="Schmutz J."/>
            <person name="Larimer F."/>
            <person name="Land M."/>
            <person name="Hauser L."/>
            <person name="Kyrpides N."/>
            <person name="Anderson I."/>
            <person name="Sieprawska-Lupa M."/>
            <person name="Whitman W.B."/>
            <person name="Richardson P."/>
        </authorList>
    </citation>
    <scope>NUCLEOTIDE SEQUENCE [LARGE SCALE GENOMIC DNA]</scope>
    <source>
        <strain>ATCC 35089 / DSM 1224 / JCM 13029 / OCM 148 / SB</strain>
    </source>
</reference>
<accession>A6US15</accession>
<proteinExistence type="inferred from homology"/>
<sequence>MANLVFLRHGESIWNKMNIFTGWVDVPLSKGGVKEAKIAGKLLKSYKFDVAYSSELIRALNTLILVMQENKASNFIKINHDSVKMKEWGKVYGAESINYTPVYKSWELNERYYGKLQGLNKERAKEIYGKDDVFLWRRSYETAPPNGESLKDTYERTVPYLKRYILPTLTYGKDVIVTAHGNSLRSIIAYLEKLNSEEVLKLEIPTGVPLVYNLDEKGLKRLGYLNKKGFDNELI</sequence>
<protein>
    <recommendedName>
        <fullName evidence="1">2,3-bisphosphoglycerate-dependent phosphoglycerate mutase</fullName>
        <shortName evidence="1">BPG-dependent PGAM</shortName>
        <shortName evidence="1">PGAM</shortName>
        <shortName evidence="1">Phosphoglyceromutase</shortName>
        <shortName evidence="1">dPGM</shortName>
        <ecNumber evidence="1">5.4.2.11</ecNumber>
    </recommendedName>
</protein>
<evidence type="ECO:0000255" key="1">
    <source>
        <dbReference type="HAMAP-Rule" id="MF_01039"/>
    </source>
</evidence>
<gene>
    <name evidence="1" type="primary">gpmA</name>
    <name type="ordered locus">Mevan_1390</name>
</gene>
<name>GPMA_METVS</name>
<dbReference type="EC" id="5.4.2.11" evidence="1"/>
<dbReference type="EMBL" id="CP000742">
    <property type="protein sequence ID" value="ABR55287.1"/>
    <property type="molecule type" value="Genomic_DNA"/>
</dbReference>
<dbReference type="RefSeq" id="WP_012066201.1">
    <property type="nucleotide sequence ID" value="NC_009634.1"/>
</dbReference>
<dbReference type="SMR" id="A6US15"/>
<dbReference type="STRING" id="406327.Mevan_1390"/>
<dbReference type="GeneID" id="5324802"/>
<dbReference type="KEGG" id="mvn:Mevan_1390"/>
<dbReference type="eggNOG" id="arCOG01993">
    <property type="taxonomic scope" value="Archaea"/>
</dbReference>
<dbReference type="HOGENOM" id="CLU_033323_1_4_2"/>
<dbReference type="OrthoDB" id="304253at2157"/>
<dbReference type="UniPathway" id="UPA00109">
    <property type="reaction ID" value="UER00186"/>
</dbReference>
<dbReference type="Proteomes" id="UP000001107">
    <property type="component" value="Chromosome"/>
</dbReference>
<dbReference type="GO" id="GO:0004619">
    <property type="term" value="F:phosphoglycerate mutase activity"/>
    <property type="evidence" value="ECO:0007669"/>
    <property type="project" value="UniProtKB-EC"/>
</dbReference>
<dbReference type="GO" id="GO:0006094">
    <property type="term" value="P:gluconeogenesis"/>
    <property type="evidence" value="ECO:0007669"/>
    <property type="project" value="UniProtKB-UniRule"/>
</dbReference>
<dbReference type="GO" id="GO:0006096">
    <property type="term" value="P:glycolytic process"/>
    <property type="evidence" value="ECO:0007669"/>
    <property type="project" value="UniProtKB-UniRule"/>
</dbReference>
<dbReference type="CDD" id="cd07067">
    <property type="entry name" value="HP_PGM_like"/>
    <property type="match status" value="1"/>
</dbReference>
<dbReference type="Gene3D" id="3.40.50.1240">
    <property type="entry name" value="Phosphoglycerate mutase-like"/>
    <property type="match status" value="1"/>
</dbReference>
<dbReference type="HAMAP" id="MF_01039">
    <property type="entry name" value="PGAM_GpmA"/>
    <property type="match status" value="1"/>
</dbReference>
<dbReference type="InterPro" id="IPR013078">
    <property type="entry name" value="His_Pase_superF_clade-1"/>
</dbReference>
<dbReference type="InterPro" id="IPR029033">
    <property type="entry name" value="His_PPase_superfam"/>
</dbReference>
<dbReference type="InterPro" id="IPR005952">
    <property type="entry name" value="Phosphogly_mut1"/>
</dbReference>
<dbReference type="NCBIfam" id="TIGR01258">
    <property type="entry name" value="pgm_1"/>
    <property type="match status" value="1"/>
</dbReference>
<dbReference type="PANTHER" id="PTHR11931">
    <property type="entry name" value="PHOSPHOGLYCERATE MUTASE"/>
    <property type="match status" value="1"/>
</dbReference>
<dbReference type="Pfam" id="PF00300">
    <property type="entry name" value="His_Phos_1"/>
    <property type="match status" value="2"/>
</dbReference>
<dbReference type="PIRSF" id="PIRSF000709">
    <property type="entry name" value="6PFK_2-Ptase"/>
    <property type="match status" value="1"/>
</dbReference>
<dbReference type="SMART" id="SM00855">
    <property type="entry name" value="PGAM"/>
    <property type="match status" value="1"/>
</dbReference>
<dbReference type="SUPFAM" id="SSF53254">
    <property type="entry name" value="Phosphoglycerate mutase-like"/>
    <property type="match status" value="1"/>
</dbReference>